<sequence length="108" mass="11760">MNDRLEEATLYLAATRPALFLGVPLTLAGLFMMFAGFVIVIVQNPLYEVVLAPLWFGARLIVERDYNAASVVLLFLRTAGRSIDSAVWGGATVSPNPIRVPPRGRGMV</sequence>
<accession>P0A3V9</accession>
<accession>P05352</accession>
<organism>
    <name type="scientific">Agrobacterium tumefaciens (strain 15955)</name>
    <dbReference type="NCBI Taxonomy" id="190386"/>
    <lineage>
        <taxon>Bacteria</taxon>
        <taxon>Pseudomonadati</taxon>
        <taxon>Pseudomonadota</taxon>
        <taxon>Alphaproteobacteria</taxon>
        <taxon>Hyphomicrobiales</taxon>
        <taxon>Rhizobiaceae</taxon>
        <taxon>Rhizobium/Agrobacterium group</taxon>
        <taxon>Agrobacterium</taxon>
        <taxon>Agrobacterium tumefaciens complex</taxon>
    </lineage>
</organism>
<gene>
    <name type="primary">virB3</name>
</gene>
<comment type="function">
    <text>VirB proteins are suggested to act at the bacterial surface and there play an important role in directing T-DNA transfer to plant cells.</text>
</comment>
<comment type="subcellular location">
    <subcellularLocation>
        <location evidence="2">Membrane</location>
        <topology evidence="2">Single-pass membrane protein</topology>
    </subcellularLocation>
</comment>
<comment type="similarity">
    <text evidence="2">Belongs to the virB3 family.</text>
</comment>
<keyword id="KW-0192">Crown gall tumor</keyword>
<keyword id="KW-0472">Membrane</keyword>
<keyword id="KW-0614">Plasmid</keyword>
<keyword id="KW-0812">Transmembrane</keyword>
<keyword id="KW-1133">Transmembrane helix</keyword>
<dbReference type="EMBL" id="X06826">
    <property type="protein sequence ID" value="CAA29974.1"/>
    <property type="molecule type" value="Genomic_DNA"/>
</dbReference>
<dbReference type="PIR" id="S00779">
    <property type="entry name" value="B3AG55"/>
</dbReference>
<dbReference type="RefSeq" id="NP_059801.1">
    <property type="nucleotide sequence ID" value="NC_002377.1"/>
</dbReference>
<dbReference type="SMR" id="P0A3V9"/>
<dbReference type="GO" id="GO:0016020">
    <property type="term" value="C:membrane"/>
    <property type="evidence" value="ECO:0007669"/>
    <property type="project" value="UniProtKB-SubCell"/>
</dbReference>
<dbReference type="InterPro" id="IPR007792">
    <property type="entry name" value="T4SS_VirB3/TrbD/AvhB"/>
</dbReference>
<dbReference type="NCBIfam" id="NF010428">
    <property type="entry name" value="PRK13854.1"/>
    <property type="match status" value="1"/>
</dbReference>
<dbReference type="Pfam" id="PF05101">
    <property type="entry name" value="VirB3"/>
    <property type="match status" value="1"/>
</dbReference>
<evidence type="ECO:0000255" key="1"/>
<evidence type="ECO:0000305" key="2"/>
<name>VIRB3_AGRT9</name>
<reference key="1">
    <citation type="journal article" date="1988" name="Nucleic Acids Res.">
        <title>Analysis of the complete nucleotide sequence of the Agrobacterium tumefaciens virB operon.</title>
        <authorList>
            <person name="Thompson D.V."/>
            <person name="Melchers L.S."/>
            <person name="Idler K.B."/>
            <person name="Shilperoort R.A."/>
            <person name="Hooykaas P.J.J."/>
        </authorList>
    </citation>
    <scope>NUCLEOTIDE SEQUENCE [GENOMIC DNA]</scope>
</reference>
<geneLocation type="plasmid">
    <name>pTi15955</name>
</geneLocation>
<protein>
    <recommendedName>
        <fullName>Protein virB3</fullName>
    </recommendedName>
</protein>
<proteinExistence type="inferred from homology"/>
<feature type="chain" id="PRO_0000065838" description="Protein virB3">
    <location>
        <begin position="1"/>
        <end position="108"/>
    </location>
</feature>
<feature type="transmembrane region" description="Helical" evidence="1">
    <location>
        <begin position="22"/>
        <end position="42"/>
    </location>
</feature>